<accession>G2QNT0</accession>
<name>LP9A_THET4</name>
<proteinExistence type="evidence at protein level"/>
<evidence type="ECO:0000250" key="1">
    <source>
        <dbReference type="UniProtKB" id="Q1K8B6"/>
    </source>
</evidence>
<evidence type="ECO:0000250" key="2">
    <source>
        <dbReference type="UniProtKB" id="Q4WP32"/>
    </source>
</evidence>
<evidence type="ECO:0000255" key="3"/>
<evidence type="ECO:0000269" key="4">
    <source>
    </source>
</evidence>
<evidence type="ECO:0000269" key="5">
    <source>
    </source>
</evidence>
<evidence type="ECO:0000303" key="6">
    <source>
    </source>
</evidence>
<evidence type="ECO:0000305" key="7"/>
<evidence type="ECO:0000305" key="8">
    <source>
    </source>
</evidence>
<evidence type="ECO:0000305" key="9">
    <source>
    </source>
</evidence>
<keyword id="KW-0119">Carbohydrate metabolism</keyword>
<keyword id="KW-0136">Cellulose degradation</keyword>
<keyword id="KW-0186">Copper</keyword>
<keyword id="KW-1015">Disulfide bond</keyword>
<keyword id="KW-0479">Metal-binding</keyword>
<keyword id="KW-0503">Monooxygenase</keyword>
<keyword id="KW-0560">Oxidoreductase</keyword>
<keyword id="KW-0624">Polysaccharide degradation</keyword>
<keyword id="KW-1185">Reference proteome</keyword>
<keyword id="KW-0964">Secreted</keyword>
<keyword id="KW-0732">Signal</keyword>
<sequence>MLTTTFALLTAALGVSAHYTLPRVGTGSDWQHVRRADNWQNNGFVGDVNSEQIRCFQATPAGAQDVYTVQAGSTVTYHANPSIYHPGPMQFYLARVPDGQDVKSWTGEGAVWFKVYEEQPQFGAQLTWPSNGKSSFEVPIPSCIRAGNYLLRAEHIALHVAQSQGGAQFYISCAQLQVTGGGSTEPSQKVSFPGAYKSTDPGILININYPVPTSYQNPGPAVFRC</sequence>
<comment type="function">
    <text evidence="4 5">Lytic polysaccharide monooxygenase (LPMO) that depolymerizes crystalline and amorphous polysaccharides via the oxidation of scissile alpha- or beta-(1-4)-glycosidic bonds, yielding C1 or C4 oxidation products (PubMed:26185526, PubMed:27588039). Catalysis by LPMOs requires the reduction of the active-site copper from Cu(II) to Cu(I) by a reducing agent and H(2)O(2) or O(2) as a cosubstrate (PubMed:27588039). Shows oxidative cleavage of xylan in addition to cellulose (PubMed:26185526). Shows a strong synergistic effect with endoglucanase I (EGI) with a 16-fold higher release of detected oligosaccharides (PubMed:26185526).</text>
</comment>
<comment type="catalytic activity">
    <reaction evidence="4 5">
        <text>[(1-&gt;4)-beta-D-glucosyl]n+m + reduced acceptor + O2 = 4-dehydro-beta-D-glucosyl-[(1-&gt;4)-beta-D-glucosyl]n-1 + [(1-&gt;4)-beta-D-glucosyl]m + acceptor + H2O.</text>
        <dbReference type="EC" id="1.14.99.56"/>
    </reaction>
</comment>
<comment type="cofactor">
    <cofactor evidence="9">
        <name>Cu(2+)</name>
        <dbReference type="ChEBI" id="CHEBI:29036"/>
    </cofactor>
    <text evidence="9">Binds 1 copper ion per subunit.</text>
</comment>
<comment type="activity regulation">
    <text evidence="5">Is able to utilize various natural phenolic compounds as reducing agents. Most of these reducing agents are present in plants, either free or as lignin building blocks, such as sinapic acid, or as flavonoids such as catechin and dopamine (PubMed:27588039). Phenolic compounds with 1,2-benzenediol and 1,2,3-benzenetriol moieties yield the highest release of oxidized and non-oxidized glucooligosaccharides from cellulose compared to monophenols or sulfur-containing compounds (PubMed:27588039).</text>
</comment>
<comment type="subcellular location">
    <subcellularLocation>
        <location evidence="8">Secreted</location>
    </subcellularLocation>
</comment>
<comment type="biotechnology">
    <text evidence="4 5">Lignocellulose is the most abundant polymeric composite on Earth and is a recalcitrant but promising renewable substrate for industrial biotechnology applications. Together with cellobiose dehydrogenases (CDHs) an enzymatic system capable of oxidative cellulose cleavage is formed, which increases the efficiency of cellulases and put LPMOs at focus of biofuel research.</text>
</comment>
<comment type="similarity">
    <text evidence="7">Belongs to the polysaccharide monooxygenase AA9 family.</text>
</comment>
<reference key="1">
    <citation type="journal article" date="2011" name="Nat. Biotechnol.">
        <title>Comparative genomic analysis of the thermophilic biomass-degrading fungi Myceliophthora thermophila and Thielavia terrestris.</title>
        <authorList>
            <person name="Berka R.M."/>
            <person name="Grigoriev I.V."/>
            <person name="Otillar R."/>
            <person name="Salamov A."/>
            <person name="Grimwood J."/>
            <person name="Reid I."/>
            <person name="Ishmael N."/>
            <person name="John T."/>
            <person name="Darmond C."/>
            <person name="Moisan M.-C."/>
            <person name="Henrissat B."/>
            <person name="Coutinho P.M."/>
            <person name="Lombard V."/>
            <person name="Natvig D.O."/>
            <person name="Lindquist E."/>
            <person name="Schmutz J."/>
            <person name="Lucas S."/>
            <person name="Harris P."/>
            <person name="Powlowski J."/>
            <person name="Bellemare A."/>
            <person name="Taylor D."/>
            <person name="Butler G."/>
            <person name="de Vries R.P."/>
            <person name="Allijn I.E."/>
            <person name="van den Brink J."/>
            <person name="Ushinsky S."/>
            <person name="Storms R."/>
            <person name="Powell A.J."/>
            <person name="Paulsen I.T."/>
            <person name="Elbourne L.D.H."/>
            <person name="Baker S.E."/>
            <person name="Magnuson J."/>
            <person name="LaBoissiere S."/>
            <person name="Clutterbuck A.J."/>
            <person name="Martinez D."/>
            <person name="Wogulis M."/>
            <person name="de Leon A.L."/>
            <person name="Rey M.W."/>
            <person name="Tsang A."/>
        </authorList>
    </citation>
    <scope>NUCLEOTIDE SEQUENCE [LARGE SCALE GENOMIC DNA]</scope>
    <source>
        <strain>ATCC 42464 / BCRC 31852 / DSM 1799</strain>
    </source>
</reference>
<reference key="2">
    <citation type="journal article" date="2015" name="Biotechnol. Biofuels">
        <title>Discovery of the combined oxidative cleavage of plant xylan and cellulose by a new fungal polysaccharide monooxygenase.</title>
        <authorList>
            <person name="Frommhagen M."/>
            <person name="Sforza S."/>
            <person name="Westphal A.H."/>
            <person name="Visser J."/>
            <person name="Hinz S.W."/>
            <person name="Koetsier M.J."/>
            <person name="van Berkel W.J."/>
            <person name="Gruppen H."/>
            <person name="Kabel M.A."/>
        </authorList>
    </citation>
    <scope>FUNCTION</scope>
    <scope>CATALYTIC ACTIVITY</scope>
    <scope>BIOTECHNOLOGY</scope>
</reference>
<reference key="3">
    <citation type="journal article" date="2016" name="Biotechnol. Biofuels">
        <title>Lytic polysaccharide monooxygenases from Myceliophthora thermophila C1 differ in substrate preference and reducing agent specificity.</title>
        <authorList>
            <person name="Frommhagen M."/>
            <person name="Koetsier M.J."/>
            <person name="Westphal A.H."/>
            <person name="Visser J."/>
            <person name="Hinz S.W."/>
            <person name="Vincken J.P."/>
            <person name="van Berkel W.J."/>
            <person name="Kabel M.A."/>
            <person name="Gruppen H."/>
        </authorList>
    </citation>
    <scope>FUNCTION</scope>
    <scope>CATALYTIC ACTIVITY</scope>
    <scope>ACTIVITY REGULATION</scope>
    <scope>BIOTECHNOLOGY</scope>
</reference>
<organism>
    <name type="scientific">Thermothelomyces thermophilus (strain ATCC 42464 / BCRC 31852 / DSM 1799)</name>
    <name type="common">Sporotrichum thermophile</name>
    <dbReference type="NCBI Taxonomy" id="573729"/>
    <lineage>
        <taxon>Eukaryota</taxon>
        <taxon>Fungi</taxon>
        <taxon>Dikarya</taxon>
        <taxon>Ascomycota</taxon>
        <taxon>Pezizomycotina</taxon>
        <taxon>Sordariomycetes</taxon>
        <taxon>Sordariomycetidae</taxon>
        <taxon>Sordariales</taxon>
        <taxon>Chaetomiaceae</taxon>
        <taxon>Thermothelomyces</taxon>
    </lineage>
</organism>
<gene>
    <name evidence="6" type="primary">LPMO9A</name>
    <name type="ORF">MYCTH_85556</name>
</gene>
<feature type="signal peptide" evidence="3">
    <location>
        <begin position="1"/>
        <end position="17"/>
    </location>
</feature>
<feature type="chain" id="PRO_5003436570" description="AA9 family lytic polysaccharide monooxygenase A">
    <location>
        <begin position="18"/>
        <end position="225"/>
    </location>
</feature>
<feature type="binding site" evidence="1">
    <location>
        <position position="18"/>
    </location>
    <ligand>
        <name>Cu(2+)</name>
        <dbReference type="ChEBI" id="CHEBI:29036"/>
        <note>catalytic</note>
    </ligand>
</feature>
<feature type="binding site" evidence="1">
    <location>
        <position position="85"/>
    </location>
    <ligand>
        <name>Cu(2+)</name>
        <dbReference type="ChEBI" id="CHEBI:29036"/>
        <note>catalytic</note>
    </ligand>
</feature>
<feature type="binding site" evidence="1">
    <location>
        <position position="159"/>
    </location>
    <ligand>
        <name>O2</name>
        <dbReference type="ChEBI" id="CHEBI:15379"/>
    </ligand>
</feature>
<feature type="binding site" evidence="1">
    <location>
        <position position="168"/>
    </location>
    <ligand>
        <name>O2</name>
        <dbReference type="ChEBI" id="CHEBI:15379"/>
    </ligand>
</feature>
<feature type="binding site" evidence="1">
    <location>
        <position position="170"/>
    </location>
    <ligand>
        <name>Cu(2+)</name>
        <dbReference type="ChEBI" id="CHEBI:29036"/>
        <note>catalytic</note>
    </ligand>
</feature>
<feature type="disulfide bond" evidence="2">
    <location>
        <begin position="55"/>
        <end position="173"/>
    </location>
</feature>
<feature type="disulfide bond" evidence="2">
    <location>
        <begin position="143"/>
        <end position="225"/>
    </location>
</feature>
<dbReference type="EC" id="1.14.99.56" evidence="4 5"/>
<dbReference type="EMBL" id="CP003008">
    <property type="protein sequence ID" value="AEO61304.1"/>
    <property type="molecule type" value="Genomic_DNA"/>
</dbReference>
<dbReference type="RefSeq" id="XP_003666549.1">
    <property type="nucleotide sequence ID" value="XM_003666501.1"/>
</dbReference>
<dbReference type="SMR" id="G2QNT0"/>
<dbReference type="STRING" id="573729.G2QNT0"/>
<dbReference type="GeneID" id="11506522"/>
<dbReference type="KEGG" id="mtm:MYCTH_85556"/>
<dbReference type="VEuPathDB" id="FungiDB:MYCTH_85556"/>
<dbReference type="eggNOG" id="ENOG502SMRF">
    <property type="taxonomic scope" value="Eukaryota"/>
</dbReference>
<dbReference type="HOGENOM" id="CLU_031730_4_2_1"/>
<dbReference type="InParanoid" id="G2QNT0"/>
<dbReference type="OMA" id="LMRNEHI"/>
<dbReference type="OrthoDB" id="5271017at2759"/>
<dbReference type="Proteomes" id="UP000007322">
    <property type="component" value="Chromosome 7"/>
</dbReference>
<dbReference type="GO" id="GO:0005576">
    <property type="term" value="C:extracellular region"/>
    <property type="evidence" value="ECO:0007669"/>
    <property type="project" value="UniProtKB-SubCell"/>
</dbReference>
<dbReference type="GO" id="GO:0046872">
    <property type="term" value="F:metal ion binding"/>
    <property type="evidence" value="ECO:0007669"/>
    <property type="project" value="UniProtKB-KW"/>
</dbReference>
<dbReference type="GO" id="GO:0004497">
    <property type="term" value="F:monooxygenase activity"/>
    <property type="evidence" value="ECO:0007669"/>
    <property type="project" value="UniProtKB-KW"/>
</dbReference>
<dbReference type="GO" id="GO:0030245">
    <property type="term" value="P:cellulose catabolic process"/>
    <property type="evidence" value="ECO:0007669"/>
    <property type="project" value="UniProtKB-KW"/>
</dbReference>
<dbReference type="CDD" id="cd21175">
    <property type="entry name" value="LPMO_AA9"/>
    <property type="match status" value="1"/>
</dbReference>
<dbReference type="Gene3D" id="2.70.50.70">
    <property type="match status" value="1"/>
</dbReference>
<dbReference type="InterPro" id="IPR049892">
    <property type="entry name" value="AA9"/>
</dbReference>
<dbReference type="InterPro" id="IPR005103">
    <property type="entry name" value="AA9_LPMO"/>
</dbReference>
<dbReference type="PANTHER" id="PTHR33353:SF3">
    <property type="entry name" value="ENDOGLUCANASE II"/>
    <property type="match status" value="1"/>
</dbReference>
<dbReference type="PANTHER" id="PTHR33353">
    <property type="entry name" value="PUTATIVE (AFU_ORTHOLOGUE AFUA_1G12560)-RELATED"/>
    <property type="match status" value="1"/>
</dbReference>
<dbReference type="Pfam" id="PF03443">
    <property type="entry name" value="AA9"/>
    <property type="match status" value="1"/>
</dbReference>
<protein>
    <recommendedName>
        <fullName evidence="6">AA9 family lytic polysaccharide monooxygenase A</fullName>
        <shortName evidence="6">LPMO9A</shortName>
        <ecNumber evidence="4 5">1.14.99.56</ecNumber>
    </recommendedName>
    <alternativeName>
        <fullName evidence="7">Cellulase LPMO9A</fullName>
    </alternativeName>
    <alternativeName>
        <fullName evidence="7">Endo-beta-1,4-glucanase LPMO9A</fullName>
        <shortName evidence="7">Endoglucanase LPMO9A</shortName>
    </alternativeName>
    <alternativeName>
        <fullName evidence="7">Glycosyl hydrolase 61 family protein LPMO9A</fullName>
    </alternativeName>
</protein>